<organism>
    <name type="scientific">Rhodococcus opacus</name>
    <name type="common">Nocardia opaca</name>
    <dbReference type="NCBI Taxonomy" id="37919"/>
    <lineage>
        <taxon>Bacteria</taxon>
        <taxon>Bacillati</taxon>
        <taxon>Actinomycetota</taxon>
        <taxon>Actinomycetes</taxon>
        <taxon>Mycobacteriales</taxon>
        <taxon>Nocardiaceae</taxon>
        <taxon>Rhodococcus</taxon>
    </lineage>
</organism>
<keyword id="KW-0002">3D-structure</keyword>
<keyword id="KW-0058">Aromatic hydrocarbons catabolism</keyword>
<keyword id="KW-0223">Dioxygenase</keyword>
<keyword id="KW-0903">Direct protein sequencing</keyword>
<keyword id="KW-0408">Iron</keyword>
<keyword id="KW-0479">Metal-binding</keyword>
<keyword id="KW-0560">Oxidoreductase</keyword>
<dbReference type="EC" id="1.13.11.1"/>
<dbReference type="EMBL" id="X99622">
    <property type="protein sequence ID" value="CAA67941.1"/>
    <property type="molecule type" value="Genomic_DNA"/>
</dbReference>
<dbReference type="PDB" id="3HGI">
    <property type="method" value="X-ray"/>
    <property type="resolution" value="1.94 A"/>
    <property type="chains" value="A=1-270"/>
</dbReference>
<dbReference type="PDB" id="3HHX">
    <property type="method" value="X-ray"/>
    <property type="resolution" value="2.00 A"/>
    <property type="chains" value="A=1-270"/>
</dbReference>
<dbReference type="PDB" id="3HHY">
    <property type="method" value="X-ray"/>
    <property type="resolution" value="1.55 A"/>
    <property type="chains" value="A=1-270"/>
</dbReference>
<dbReference type="PDB" id="3HJ8">
    <property type="method" value="X-ray"/>
    <property type="resolution" value="2.40 A"/>
    <property type="chains" value="A=1-270"/>
</dbReference>
<dbReference type="PDB" id="3HJQ">
    <property type="method" value="X-ray"/>
    <property type="resolution" value="2.00 A"/>
    <property type="chains" value="A=1-270"/>
</dbReference>
<dbReference type="PDB" id="3HJS">
    <property type="method" value="X-ray"/>
    <property type="resolution" value="1.80 A"/>
    <property type="chains" value="A=1-270"/>
</dbReference>
<dbReference type="PDB" id="3HKP">
    <property type="method" value="X-ray"/>
    <property type="resolution" value="1.85 A"/>
    <property type="chains" value="A=1-270"/>
</dbReference>
<dbReference type="PDB" id="3I4V">
    <property type="method" value="X-ray"/>
    <property type="resolution" value="2.00 A"/>
    <property type="chains" value="A=1-270"/>
</dbReference>
<dbReference type="PDB" id="3I4Y">
    <property type="method" value="X-ray"/>
    <property type="resolution" value="1.85 A"/>
    <property type="chains" value="A=1-270"/>
</dbReference>
<dbReference type="PDB" id="3I51">
    <property type="method" value="X-ray"/>
    <property type="resolution" value="1.80 A"/>
    <property type="chains" value="A=1-270"/>
</dbReference>
<dbReference type="PDBsum" id="3HGI"/>
<dbReference type="PDBsum" id="3HHX"/>
<dbReference type="PDBsum" id="3HHY"/>
<dbReference type="PDBsum" id="3HJ8"/>
<dbReference type="PDBsum" id="3HJQ"/>
<dbReference type="PDBsum" id="3HJS"/>
<dbReference type="PDBsum" id="3HKP"/>
<dbReference type="PDBsum" id="3I4V"/>
<dbReference type="PDBsum" id="3I4Y"/>
<dbReference type="PDBsum" id="3I51"/>
<dbReference type="SMR" id="P95607"/>
<dbReference type="eggNOG" id="COG3485">
    <property type="taxonomic scope" value="Bacteria"/>
</dbReference>
<dbReference type="BRENDA" id="1.13.11.1">
    <property type="organism ID" value="4353"/>
</dbReference>
<dbReference type="EvolutionaryTrace" id="P95607"/>
<dbReference type="GO" id="GO:0018576">
    <property type="term" value="F:catechol 1,2-dioxygenase activity"/>
    <property type="evidence" value="ECO:0007669"/>
    <property type="project" value="UniProtKB-EC"/>
</dbReference>
<dbReference type="GO" id="GO:0008199">
    <property type="term" value="F:ferric iron binding"/>
    <property type="evidence" value="ECO:0007669"/>
    <property type="project" value="InterPro"/>
</dbReference>
<dbReference type="GO" id="GO:0009056">
    <property type="term" value="P:catabolic process"/>
    <property type="evidence" value="ECO:0007669"/>
    <property type="project" value="UniProtKB-KW"/>
</dbReference>
<dbReference type="GO" id="GO:0009712">
    <property type="term" value="P:catechol-containing compound metabolic process"/>
    <property type="evidence" value="ECO:0007669"/>
    <property type="project" value="InterPro"/>
</dbReference>
<dbReference type="CDD" id="cd03462">
    <property type="entry name" value="1_2-CCD"/>
    <property type="match status" value="1"/>
</dbReference>
<dbReference type="Gene3D" id="2.60.130.10">
    <property type="entry name" value="Aromatic compound dioxygenase"/>
    <property type="match status" value="1"/>
</dbReference>
<dbReference type="Gene3D" id="6.10.10.40">
    <property type="entry name" value="Catechol 1,2-dioxygenase multimerisation domain-like"/>
    <property type="match status" value="1"/>
</dbReference>
<dbReference type="InterPro" id="IPR043029">
    <property type="entry name" value="1_2-CTD_multi_dom"/>
</dbReference>
<dbReference type="InterPro" id="IPR007535">
    <property type="entry name" value="Catechol_dOase_N"/>
</dbReference>
<dbReference type="InterPro" id="IPR012800">
    <property type="entry name" value="Cchol_dOase_actb"/>
</dbReference>
<dbReference type="InterPro" id="IPR012817">
    <property type="entry name" value="Chlorcchol_dOase"/>
</dbReference>
<dbReference type="InterPro" id="IPR000627">
    <property type="entry name" value="Intradiol_dOase_C"/>
</dbReference>
<dbReference type="InterPro" id="IPR015889">
    <property type="entry name" value="Intradiol_dOase_core"/>
</dbReference>
<dbReference type="InterPro" id="IPR050770">
    <property type="entry name" value="Intradiol_RC_Dioxygenase"/>
</dbReference>
<dbReference type="NCBIfam" id="TIGR02438">
    <property type="entry name" value="catachol_actin"/>
    <property type="match status" value="1"/>
</dbReference>
<dbReference type="PANTHER" id="PTHR33711">
    <property type="entry name" value="DIOXYGENASE, PUTATIVE (AFU_ORTHOLOGUE AFUA_2G02910)-RELATED"/>
    <property type="match status" value="1"/>
</dbReference>
<dbReference type="PANTHER" id="PTHR33711:SF7">
    <property type="entry name" value="INTRADIOL RING-CLEAVAGE DIOXYGENASES DOMAIN-CONTAINING PROTEIN-RELATED"/>
    <property type="match status" value="1"/>
</dbReference>
<dbReference type="Pfam" id="PF00775">
    <property type="entry name" value="Dioxygenase_C"/>
    <property type="match status" value="1"/>
</dbReference>
<dbReference type="Pfam" id="PF04444">
    <property type="entry name" value="Dioxygenase_N"/>
    <property type="match status" value="1"/>
</dbReference>
<dbReference type="SUPFAM" id="SSF49482">
    <property type="entry name" value="Aromatic compound dioxygenase"/>
    <property type="match status" value="1"/>
</dbReference>
<dbReference type="PROSITE" id="PS00083">
    <property type="entry name" value="INTRADIOL_DIOXYGENAS"/>
    <property type="match status" value="1"/>
</dbReference>
<gene>
    <name type="primary">catA</name>
</gene>
<sequence>GSGSAATDKFKAERATADTSPERLAAIAKDALGALNDVILKHGVTYPEYRVFKQWLIDVGEGGEWPLFLDVFIEHSVEEVLARSRKGTMGSIEGPYYIENSPELPSKCTLPMREEDEKITPLVFSGQVTDLDGNGLAGAKVELWHADNDGYYSQFAPHLPEWNLRGTIIADEEGRYEITTIQPAPYQIPTDGPTGQFIEAQNGHPWRPAHLHLIVSAPGKESVTTQLYFKGGEWIDSDVASATKPELILDPKTGDDGKNYVTYNFVLDPA</sequence>
<protein>
    <recommendedName>
        <fullName>Catechol 1,2-dioxygenase</fullName>
        <ecNumber>1.13.11.1</ecNumber>
    </recommendedName>
    <alternativeName>
        <fullName>1,2-CTD</fullName>
    </alternativeName>
</protein>
<evidence type="ECO:0000250" key="1"/>
<evidence type="ECO:0000305" key="2"/>
<evidence type="ECO:0007829" key="3">
    <source>
        <dbReference type="PDB" id="3HHY"/>
    </source>
</evidence>
<evidence type="ECO:0007829" key="4">
    <source>
        <dbReference type="PDB" id="3HJS"/>
    </source>
</evidence>
<evidence type="ECO:0007829" key="5">
    <source>
        <dbReference type="PDB" id="3I4Y"/>
    </source>
</evidence>
<feature type="chain" id="PRO_0000085084" description="Catechol 1,2-dioxygenase">
    <location>
        <begin position="1" status="less than"/>
        <end position="270"/>
    </location>
</feature>
<feature type="binding site" evidence="1">
    <location>
        <position position="152"/>
    </location>
    <ligand>
        <name>Fe cation</name>
        <dbReference type="ChEBI" id="CHEBI:24875"/>
    </ligand>
</feature>
<feature type="binding site" evidence="1">
    <location>
        <position position="186"/>
    </location>
    <ligand>
        <name>Fe cation</name>
        <dbReference type="ChEBI" id="CHEBI:24875"/>
    </ligand>
</feature>
<feature type="binding site" evidence="1">
    <location>
        <position position="210"/>
    </location>
    <ligand>
        <name>Fe cation</name>
        <dbReference type="ChEBI" id="CHEBI:24875"/>
    </ligand>
</feature>
<feature type="binding site" evidence="1">
    <location>
        <position position="212"/>
    </location>
    <ligand>
        <name>Fe cation</name>
        <dbReference type="ChEBI" id="CHEBI:24875"/>
    </ligand>
</feature>
<feature type="non-terminal residue">
    <location>
        <position position="1"/>
    </location>
</feature>
<feature type="helix" evidence="3">
    <location>
        <begin position="21"/>
        <end position="42"/>
    </location>
</feature>
<feature type="helix" evidence="3">
    <location>
        <begin position="46"/>
        <end position="61"/>
    </location>
</feature>
<feature type="helix" evidence="3">
    <location>
        <begin position="65"/>
        <end position="72"/>
    </location>
</feature>
<feature type="helix" evidence="3">
    <location>
        <begin position="74"/>
        <end position="83"/>
    </location>
</feature>
<feature type="strand" evidence="3">
    <location>
        <begin position="106"/>
        <end position="109"/>
    </location>
</feature>
<feature type="helix" evidence="3">
    <location>
        <begin position="116"/>
        <end position="118"/>
    </location>
</feature>
<feature type="strand" evidence="3">
    <location>
        <begin position="121"/>
        <end position="129"/>
    </location>
</feature>
<feature type="strand" evidence="5">
    <location>
        <begin position="131"/>
        <end position="133"/>
    </location>
</feature>
<feature type="strand" evidence="3">
    <location>
        <begin position="140"/>
        <end position="144"/>
    </location>
</feature>
<feature type="turn" evidence="3">
    <location>
        <begin position="161"/>
        <end position="164"/>
    </location>
</feature>
<feature type="strand" evidence="3">
    <location>
        <begin position="165"/>
        <end position="169"/>
    </location>
</feature>
<feature type="strand" evidence="3">
    <location>
        <begin position="174"/>
        <end position="181"/>
    </location>
</feature>
<feature type="helix" evidence="3">
    <location>
        <begin position="193"/>
        <end position="200"/>
    </location>
</feature>
<feature type="strand" evidence="3">
    <location>
        <begin position="211"/>
        <end position="216"/>
    </location>
</feature>
<feature type="strand" evidence="3">
    <location>
        <begin position="223"/>
        <end position="229"/>
    </location>
</feature>
<feature type="turn" evidence="3">
    <location>
        <begin position="233"/>
        <end position="236"/>
    </location>
</feature>
<feature type="helix" evidence="3">
    <location>
        <begin position="245"/>
        <end position="247"/>
    </location>
</feature>
<feature type="strand" evidence="3">
    <location>
        <begin position="259"/>
        <end position="262"/>
    </location>
</feature>
<feature type="strand" evidence="4">
    <location>
        <begin position="265"/>
        <end position="267"/>
    </location>
</feature>
<comment type="catalytic activity">
    <reaction>
        <text>catechol + O2 = cis,cis-muconate + 2 H(+)</text>
        <dbReference type="Rhea" id="RHEA:23852"/>
        <dbReference type="ChEBI" id="CHEBI:15378"/>
        <dbReference type="ChEBI" id="CHEBI:15379"/>
        <dbReference type="ChEBI" id="CHEBI:18135"/>
        <dbReference type="ChEBI" id="CHEBI:32379"/>
        <dbReference type="EC" id="1.13.11.1"/>
    </reaction>
</comment>
<comment type="cofactor">
    <cofactor>
        <name>Fe(3+)</name>
        <dbReference type="ChEBI" id="CHEBI:29034"/>
    </cofactor>
    <text>Binds 1 Fe(3+) ion per subunit.</text>
</comment>
<comment type="similarity">
    <text evidence="2">Belongs to the intradiol ring-cleavage dioxygenase family.</text>
</comment>
<proteinExistence type="evidence at protein level"/>
<name>CATA_RHOOP</name>
<reference key="1">
    <citation type="journal article" date="1997" name="J. Bacteriol.">
        <title>Characterization of catechol catabolic genes from Rhodococcus erythropolis 1CP.</title>
        <authorList>
            <person name="Eulberg D."/>
            <person name="Golovleva L.A."/>
            <person name="Schloemann M."/>
        </authorList>
    </citation>
    <scope>NUCLEOTIDE SEQUENCE [GENOMIC DNA]</scope>
    <scope>PROTEIN SEQUENCE OF 113-132 AND 195-203</scope>
    <source>
        <strain>1CP</strain>
    </source>
</reference>
<accession>P95607</accession>